<accession>P29245</accession>
<comment type="miscellaneous">
    <text>There are at least 12 different components in Midge globin.</text>
</comment>
<comment type="similarity">
    <text evidence="1">Belongs to the globin family.</text>
</comment>
<reference key="1">
    <citation type="submission" date="1990-09" db="EMBL/GenBank/DDBJ databases">
        <authorList>
            <person name="Hankeln T."/>
            <person name="Rozynek P."/>
            <person name="Schmidt E.R."/>
            <person name="Broecker M."/>
        </authorList>
    </citation>
    <scope>NUCLEOTIDE SEQUENCE [GENOMIC DNA]</scope>
</reference>
<evidence type="ECO:0000255" key="1">
    <source>
        <dbReference type="PROSITE-ProRule" id="PRU00238"/>
    </source>
</evidence>
<dbReference type="EMBL" id="X56271">
    <property type="protein sequence ID" value="CAA39717.1"/>
    <property type="molecule type" value="Genomic_DNA"/>
</dbReference>
<dbReference type="PIR" id="S21632">
    <property type="entry name" value="S21632"/>
</dbReference>
<dbReference type="SMR" id="P29245"/>
<dbReference type="GO" id="GO:0005576">
    <property type="term" value="C:extracellular region"/>
    <property type="evidence" value="ECO:0007669"/>
    <property type="project" value="InterPro"/>
</dbReference>
<dbReference type="GO" id="GO:0005833">
    <property type="term" value="C:hemoglobin complex"/>
    <property type="evidence" value="ECO:0007669"/>
    <property type="project" value="InterPro"/>
</dbReference>
<dbReference type="GO" id="GO:0020037">
    <property type="term" value="F:heme binding"/>
    <property type="evidence" value="ECO:0007669"/>
    <property type="project" value="InterPro"/>
</dbReference>
<dbReference type="GO" id="GO:0046872">
    <property type="term" value="F:metal ion binding"/>
    <property type="evidence" value="ECO:0007669"/>
    <property type="project" value="UniProtKB-KW"/>
</dbReference>
<dbReference type="GO" id="GO:0019825">
    <property type="term" value="F:oxygen binding"/>
    <property type="evidence" value="ECO:0007669"/>
    <property type="project" value="InterPro"/>
</dbReference>
<dbReference type="GO" id="GO:0005344">
    <property type="term" value="F:oxygen carrier activity"/>
    <property type="evidence" value="ECO:0007669"/>
    <property type="project" value="UniProtKB-KW"/>
</dbReference>
<dbReference type="CDD" id="cd01040">
    <property type="entry name" value="Mb-like"/>
    <property type="match status" value="1"/>
</dbReference>
<dbReference type="Gene3D" id="1.10.490.10">
    <property type="entry name" value="Globins"/>
    <property type="match status" value="1"/>
</dbReference>
<dbReference type="InterPro" id="IPR002336">
    <property type="entry name" value="Erythrocruorin"/>
</dbReference>
<dbReference type="InterPro" id="IPR000971">
    <property type="entry name" value="Globin"/>
</dbReference>
<dbReference type="InterPro" id="IPR009050">
    <property type="entry name" value="Globin-like_sf"/>
</dbReference>
<dbReference type="InterPro" id="IPR012292">
    <property type="entry name" value="Globin/Proto"/>
</dbReference>
<dbReference type="InterPro" id="IPR044399">
    <property type="entry name" value="Mb-like_M"/>
</dbReference>
<dbReference type="PANTHER" id="PTHR47217">
    <property type="entry name" value="GLOBIN-LIKE PROTEIN"/>
    <property type="match status" value="1"/>
</dbReference>
<dbReference type="PANTHER" id="PTHR47217:SF1">
    <property type="entry name" value="GLOBIN-LIKE PROTEIN"/>
    <property type="match status" value="1"/>
</dbReference>
<dbReference type="Pfam" id="PF00042">
    <property type="entry name" value="Globin"/>
    <property type="match status" value="1"/>
</dbReference>
<dbReference type="PRINTS" id="PR00611">
    <property type="entry name" value="ERYTHCRUORIN"/>
</dbReference>
<dbReference type="SUPFAM" id="SSF46458">
    <property type="entry name" value="Globin-like"/>
    <property type="match status" value="1"/>
</dbReference>
<dbReference type="PROSITE" id="PS01033">
    <property type="entry name" value="GLOBIN"/>
    <property type="match status" value="1"/>
</dbReference>
<keyword id="KW-0349">Heme</keyword>
<keyword id="KW-0408">Iron</keyword>
<keyword id="KW-0479">Metal-binding</keyword>
<keyword id="KW-0561">Oxygen transport</keyword>
<keyword id="KW-0732">Signal</keyword>
<keyword id="KW-0813">Transport</keyword>
<proteinExistence type="inferred from homology"/>
<organism>
    <name type="scientific">Chironomus thummi piger</name>
    <name type="common">Midge</name>
    <name type="synonym">Chironomus piger</name>
    <dbReference type="NCBI Taxonomy" id="7156"/>
    <lineage>
        <taxon>Eukaryota</taxon>
        <taxon>Metazoa</taxon>
        <taxon>Ecdysozoa</taxon>
        <taxon>Arthropoda</taxon>
        <taxon>Hexapoda</taxon>
        <taxon>Insecta</taxon>
        <taxon>Pterygota</taxon>
        <taxon>Neoptera</taxon>
        <taxon>Endopterygota</taxon>
        <taxon>Diptera</taxon>
        <taxon>Nematocera</taxon>
        <taxon>Chironomoidea</taxon>
        <taxon>Chironomidae</taxon>
        <taxon>Chironominae</taxon>
        <taxon>Chironomus</taxon>
    </lineage>
</organism>
<sequence length="163" mass="17826">MKFFAVLALCIVGAIAHPLTSDEAALVKSSWAQVKHNEVDILYTVFKAYPDIQARFPQFAGKDLDSIKTSGQFATHATRIVSFFSELIALSGSESNLSAIYGLISKMGTDHKNRGITQTQFNEFRTALVSYISSNVSWGDNVAAAWTHALDNVYTAVFQIVTA</sequence>
<gene>
    <name type="primary">CTT-Z</name>
</gene>
<name>GLBZ_CHITP</name>
<feature type="signal peptide">
    <location>
        <begin position="1"/>
        <end position="16"/>
    </location>
</feature>
<feature type="chain" id="PRO_0000011211" description="Globin CTT-Z">
    <location>
        <begin position="17"/>
        <end position="163"/>
    </location>
</feature>
<feature type="domain" description="Globin" evidence="1">
    <location>
        <begin position="18"/>
        <end position="162"/>
    </location>
</feature>
<feature type="binding site" description="distal binding residue" evidence="1">
    <location>
        <position position="76"/>
    </location>
    <ligand>
        <name>heme b</name>
        <dbReference type="ChEBI" id="CHEBI:60344"/>
    </ligand>
    <ligandPart>
        <name>Fe</name>
        <dbReference type="ChEBI" id="CHEBI:18248"/>
    </ligandPart>
</feature>
<feature type="binding site" description="proximal binding residue" evidence="1">
    <location>
        <position position="111"/>
    </location>
    <ligand>
        <name>heme b</name>
        <dbReference type="ChEBI" id="CHEBI:60344"/>
    </ligand>
    <ligandPart>
        <name>Fe</name>
        <dbReference type="ChEBI" id="CHEBI:18248"/>
    </ligandPart>
</feature>
<protein>
    <recommendedName>
        <fullName>Globin CTT-Z</fullName>
    </recommendedName>
    <alternativeName>
        <fullName>HBZ</fullName>
    </alternativeName>
</protein>